<name>INTLP_ALLMI</name>
<dbReference type="SMR" id="P86928"/>
<dbReference type="GO" id="GO:0005615">
    <property type="term" value="C:extracellular space"/>
    <property type="evidence" value="ECO:0000314"/>
    <property type="project" value="UniProtKB"/>
</dbReference>
<dbReference type="GO" id="GO:0005537">
    <property type="term" value="F:D-mannose binding"/>
    <property type="evidence" value="ECO:0000314"/>
    <property type="project" value="UniProtKB"/>
</dbReference>
<dbReference type="GO" id="GO:2001065">
    <property type="term" value="F:mannan binding"/>
    <property type="evidence" value="ECO:0000314"/>
    <property type="project" value="UniProtKB"/>
</dbReference>
<dbReference type="GO" id="GO:0046872">
    <property type="term" value="F:metal ion binding"/>
    <property type="evidence" value="ECO:0007669"/>
    <property type="project" value="UniProtKB-KW"/>
</dbReference>
<dbReference type="GO" id="GO:0070492">
    <property type="term" value="F:oligosaccharide binding"/>
    <property type="evidence" value="ECO:0007669"/>
    <property type="project" value="TreeGrafter"/>
</dbReference>
<dbReference type="Gene3D" id="3.90.215.10">
    <property type="entry name" value="Gamma Fibrinogen, chain A, domain 1"/>
    <property type="match status" value="1"/>
</dbReference>
<dbReference type="InterPro" id="IPR036056">
    <property type="entry name" value="Fibrinogen-like_C"/>
</dbReference>
<dbReference type="InterPro" id="IPR014716">
    <property type="entry name" value="Fibrinogen_a/b/g_C_1"/>
</dbReference>
<dbReference type="NCBIfam" id="NF040941">
    <property type="entry name" value="GGGWT_bact"/>
    <property type="match status" value="1"/>
</dbReference>
<dbReference type="PANTHER" id="PTHR16146">
    <property type="entry name" value="INTELECTIN"/>
    <property type="match status" value="1"/>
</dbReference>
<dbReference type="PANTHER" id="PTHR16146:SF46">
    <property type="entry name" value="INTELECTIN-1A-RELATED"/>
    <property type="match status" value="1"/>
</dbReference>
<dbReference type="SUPFAM" id="SSF56496">
    <property type="entry name" value="Fibrinogen C-terminal domain-like"/>
    <property type="match status" value="1"/>
</dbReference>
<comment type="function">
    <text evidence="4">Binds mannan, mannose and, to a lesser degree, D-lactose, N-acetylgalactosamine, N-acetylglucosamine and beta-D-glucose.</text>
</comment>
<comment type="subunit">
    <text evidence="4">Monomer, homodimer, homotrimer and homotetramer. Mostly monomeric or dimeric.</text>
</comment>
<comment type="subcellular location">
    <subcellularLocation>
        <location evidence="4">Secreted</location>
    </subcellularLocation>
</comment>
<comment type="mass spectrometry" mass="34640.0" method="Electrospray" evidence="4">
    <text>Monomer.</text>
</comment>
<protein>
    <recommendedName>
        <fullName evidence="7">Intelectin-like protein</fullName>
    </recommendedName>
    <alternativeName>
        <fullName evidence="5">Mannose-specific lectin</fullName>
    </alternativeName>
</protein>
<sequence length="313" mass="34001">NNQLALKLAATGGSTNSLPALALQNLLNTWEDTSCCSQTSPGQQSWPRDGAQDGLYTLSTADGEIYQTFCDMSTHGGGWTLVASVHENNAHGKCTVGDRWSSQQGNSPLYPEGDGNWANNNIFGSAMGSTSDDYKNPGYYDLQAGDLSVWHVPDRAPLRKEMIESSVLLFYRTGFLSSEGGNLLRLYEKYPVKYGAGSCKVDNGPAVPIVYDFGSAEKTAAYYSPSGRGEFTAGFVQFRVFNNEKAPMALCSGLKVTGCNTEHHCIGGGGFFPEGNPRQCGDFPAFDWDGYGTHQSWSTSREMIESSVLLFYR</sequence>
<reference evidence="6" key="1">
    <citation type="journal article" date="2012" name="Comp. Biochem. Physiol.">
        <title>Isolation and determination of the primary structure of a lectin protein from the serum of the American alligator (Alligator mississippiensis).</title>
        <authorList>
            <person name="Darville L.N."/>
            <person name="Merchant M.E."/>
            <person name="Maccha V."/>
            <person name="Siddavarapu V.R."/>
            <person name="Hasan A."/>
            <person name="Murray K.K."/>
        </authorList>
    </citation>
    <scope>PROTEIN SEQUENCE</scope>
    <scope>FUNCTION</scope>
    <scope>SUBUNIT</scope>
    <scope>SUBCELLULAR LOCATION</scope>
    <scope>MASS SPECTROMETRY</scope>
    <source>
        <tissue evidence="4">Serum</tissue>
    </source>
</reference>
<proteinExistence type="evidence at protein level"/>
<keyword id="KW-0106">Calcium</keyword>
<keyword id="KW-0903">Direct protein sequencing</keyword>
<keyword id="KW-1015">Disulfide bond</keyword>
<keyword id="KW-0430">Lectin</keyword>
<keyword id="KW-0465">Mannose-binding</keyword>
<keyword id="KW-0479">Metal-binding</keyword>
<keyword id="KW-0964">Secreted</keyword>
<feature type="chain" id="PRO_0000415413" description="Intelectin-like protein">
    <location>
        <begin position="1"/>
        <end position="313"/>
    </location>
</feature>
<feature type="domain" description="Fibrinogen C-terminal" evidence="3">
    <location>
        <begin position="33"/>
        <end position="251"/>
    </location>
</feature>
<feature type="binding site" evidence="2">
    <location>
        <position position="86"/>
    </location>
    <ligand>
        <name>Ca(2+)</name>
        <dbReference type="ChEBI" id="CHEBI:29108"/>
        <label>1</label>
    </ligand>
</feature>
<feature type="binding site" evidence="2">
    <location>
        <position position="87"/>
    </location>
    <ligand>
        <name>Ca(2+)</name>
        <dbReference type="ChEBI" id="CHEBI:29108"/>
        <label>2</label>
    </ligand>
</feature>
<feature type="binding site" evidence="1">
    <location>
        <position position="89"/>
    </location>
    <ligand>
        <name>Ca(2+)</name>
        <dbReference type="ChEBI" id="CHEBI:29108"/>
        <label>2</label>
    </ligand>
</feature>
<feature type="binding site" evidence="2">
    <location>
        <position position="92"/>
    </location>
    <ligand>
        <name>Ca(2+)</name>
        <dbReference type="ChEBI" id="CHEBI:29108"/>
        <label>2</label>
    </ligand>
</feature>
<feature type="binding site" evidence="2">
    <location>
        <position position="97"/>
    </location>
    <ligand>
        <name>Ca(2+)</name>
        <dbReference type="ChEBI" id="CHEBI:29108"/>
        <label>1</label>
    </ligand>
</feature>
<feature type="binding site" evidence="2">
    <location>
        <position position="98"/>
    </location>
    <ligand>
        <name>Ca(2+)</name>
        <dbReference type="ChEBI" id="CHEBI:29108"/>
        <label>2</label>
    </ligand>
</feature>
<feature type="binding site" evidence="2">
    <location>
        <position position="133"/>
    </location>
    <ligand>
        <name>Ca(2+)</name>
        <dbReference type="ChEBI" id="CHEBI:29108"/>
        <label>1</label>
    </ligand>
</feature>
<feature type="binding site" evidence="2">
    <location>
        <position position="260"/>
    </location>
    <ligand>
        <name>Ca(2+)</name>
        <dbReference type="ChEBI" id="CHEBI:29108"/>
        <label>3</label>
    </ligand>
</feature>
<feature type="binding site" evidence="2">
    <location>
        <begin position="262"/>
        <end position="263"/>
    </location>
    <ligand>
        <name>a carbohydrate</name>
        <dbReference type="ChEBI" id="CHEBI:16646"/>
    </ligand>
</feature>
<feature type="binding site" evidence="2">
    <location>
        <position position="262"/>
    </location>
    <ligand>
        <name>Ca(2+)</name>
        <dbReference type="ChEBI" id="CHEBI:29108"/>
        <label>3</label>
    </ligand>
</feature>
<feature type="binding site" evidence="2">
    <location>
        <position position="274"/>
    </location>
    <ligand>
        <name>a carbohydrate</name>
        <dbReference type="ChEBI" id="CHEBI:16646"/>
    </ligand>
</feature>
<feature type="binding site" evidence="2">
    <location>
        <position position="274"/>
    </location>
    <ligand>
        <name>Ca(2+)</name>
        <dbReference type="ChEBI" id="CHEBI:29108"/>
        <label>3</label>
    </ligand>
</feature>
<feature type="binding site" evidence="2">
    <location>
        <position position="282"/>
    </location>
    <ligand>
        <name>Ca(2+)</name>
        <dbReference type="ChEBI" id="CHEBI:29108"/>
        <label>1</label>
    </ligand>
</feature>
<feature type="disulfide bond" evidence="2">
    <location>
        <begin position="94"/>
        <end position="280"/>
    </location>
</feature>
<feature type="disulfide bond" evidence="2">
    <location>
        <begin position="199"/>
        <end position="259"/>
    </location>
</feature>
<feature type="disulfide bond" evidence="2">
    <location>
        <begin position="251"/>
        <end position="265"/>
    </location>
</feature>
<accession>P86928</accession>
<organism>
    <name type="scientific">Alligator mississippiensis</name>
    <name type="common">American alligator</name>
    <dbReference type="NCBI Taxonomy" id="8496"/>
    <lineage>
        <taxon>Eukaryota</taxon>
        <taxon>Metazoa</taxon>
        <taxon>Chordata</taxon>
        <taxon>Craniata</taxon>
        <taxon>Vertebrata</taxon>
        <taxon>Euteleostomi</taxon>
        <taxon>Archelosauria</taxon>
        <taxon>Archosauria</taxon>
        <taxon>Crocodylia</taxon>
        <taxon>Alligatoridae</taxon>
        <taxon>Alligatorinae</taxon>
        <taxon>Alligator</taxon>
    </lineage>
</organism>
<evidence type="ECO:0000250" key="1">
    <source>
        <dbReference type="UniProtKB" id="Q5PPM0"/>
    </source>
</evidence>
<evidence type="ECO:0000250" key="2">
    <source>
        <dbReference type="UniProtKB" id="Q8WWA0"/>
    </source>
</evidence>
<evidence type="ECO:0000255" key="3"/>
<evidence type="ECO:0000269" key="4">
    <source>
    </source>
</evidence>
<evidence type="ECO:0000303" key="5">
    <source>
    </source>
</evidence>
<evidence type="ECO:0000305" key="6"/>
<evidence type="ECO:0000305" key="7">
    <source>
    </source>
</evidence>